<sequence>MTKIERALISVSDKNGVLEFARELSALGVHILSTGGTAKLLLEAGLPVTEVSDYTGFPEMLDGRVKTLHPKVHGGILGRRDLPEHVATMAEHGIGNIDLVCVNLYPFEATVANPDCSLEDAIENIDIGGPTMVRSAAKNWAHVAIVTDSADYPALVGELKANGGRLAKATRFELAKKAFTHTAAYDGAISNYLTSLAEGVVAGKPERVAFPNRLNAQFIKVQDMRYGENPHQAAAFYRDLDPAAGSIAHYKQLQGKELSYNNIADADAAWEAVKTFEQTACVIVKHANPCGVAVGPDTLSAYKLAFATDTTSAFGGIIAFNRPVDAATVEAVTGQFLEVLIAPSFTEEAKAIIAAKKNVRVLEIPLESGANRFELKRVGGGVLVQTPDIRNVGLDELRVVSKRQPTPQEMSDLLFAWRVAKFVKSNAIVFCKDGQTAGIGAGQMSRVDSTRIAARKAQDAGLSLAGAVAASDAFFPFRDGIDVIAEQGIKAIIQPGGSMRDEEVFAAADEHGIALVLTGVRHFRH</sequence>
<dbReference type="EC" id="2.1.2.3" evidence="1"/>
<dbReference type="EC" id="3.5.4.10" evidence="1"/>
<dbReference type="EMBL" id="AE016825">
    <property type="protein sequence ID" value="AAQ58222.1"/>
    <property type="molecule type" value="Genomic_DNA"/>
</dbReference>
<dbReference type="RefSeq" id="WP_011134101.1">
    <property type="nucleotide sequence ID" value="NC_005085.1"/>
</dbReference>
<dbReference type="SMR" id="Q7P0M1"/>
<dbReference type="STRING" id="243365.CV_0546"/>
<dbReference type="KEGG" id="cvi:CV_0546"/>
<dbReference type="eggNOG" id="COG0138">
    <property type="taxonomic scope" value="Bacteria"/>
</dbReference>
<dbReference type="HOGENOM" id="CLU_016316_5_2_4"/>
<dbReference type="OrthoDB" id="9802065at2"/>
<dbReference type="UniPathway" id="UPA00074">
    <property type="reaction ID" value="UER00133"/>
</dbReference>
<dbReference type="UniPathway" id="UPA00074">
    <property type="reaction ID" value="UER00135"/>
</dbReference>
<dbReference type="Proteomes" id="UP000001424">
    <property type="component" value="Chromosome"/>
</dbReference>
<dbReference type="GO" id="GO:0005829">
    <property type="term" value="C:cytosol"/>
    <property type="evidence" value="ECO:0007669"/>
    <property type="project" value="TreeGrafter"/>
</dbReference>
<dbReference type="GO" id="GO:0003937">
    <property type="term" value="F:IMP cyclohydrolase activity"/>
    <property type="evidence" value="ECO:0007669"/>
    <property type="project" value="UniProtKB-UniRule"/>
</dbReference>
<dbReference type="GO" id="GO:0004643">
    <property type="term" value="F:phosphoribosylaminoimidazolecarboxamide formyltransferase activity"/>
    <property type="evidence" value="ECO:0007669"/>
    <property type="project" value="UniProtKB-UniRule"/>
</dbReference>
<dbReference type="GO" id="GO:0006189">
    <property type="term" value="P:'de novo' IMP biosynthetic process"/>
    <property type="evidence" value="ECO:0007669"/>
    <property type="project" value="UniProtKB-UniRule"/>
</dbReference>
<dbReference type="CDD" id="cd01421">
    <property type="entry name" value="IMPCH"/>
    <property type="match status" value="1"/>
</dbReference>
<dbReference type="FunFam" id="3.40.140.20:FF:000001">
    <property type="entry name" value="Bifunctional purine biosynthesis protein PurH"/>
    <property type="match status" value="1"/>
</dbReference>
<dbReference type="FunFam" id="3.40.140.20:FF:000002">
    <property type="entry name" value="Bifunctional purine biosynthesis protein PurH"/>
    <property type="match status" value="1"/>
</dbReference>
<dbReference type="FunFam" id="3.40.50.1380:FF:000001">
    <property type="entry name" value="Bifunctional purine biosynthesis protein PurH"/>
    <property type="match status" value="1"/>
</dbReference>
<dbReference type="Gene3D" id="3.40.140.20">
    <property type="match status" value="2"/>
</dbReference>
<dbReference type="Gene3D" id="3.40.50.1380">
    <property type="entry name" value="Methylglyoxal synthase-like domain"/>
    <property type="match status" value="1"/>
</dbReference>
<dbReference type="HAMAP" id="MF_00139">
    <property type="entry name" value="PurH"/>
    <property type="match status" value="1"/>
</dbReference>
<dbReference type="InterPro" id="IPR024051">
    <property type="entry name" value="AICAR_Tfase_dup_dom_sf"/>
</dbReference>
<dbReference type="InterPro" id="IPR016193">
    <property type="entry name" value="Cytidine_deaminase-like"/>
</dbReference>
<dbReference type="InterPro" id="IPR011607">
    <property type="entry name" value="MGS-like_dom"/>
</dbReference>
<dbReference type="InterPro" id="IPR036914">
    <property type="entry name" value="MGS-like_dom_sf"/>
</dbReference>
<dbReference type="InterPro" id="IPR002695">
    <property type="entry name" value="PurH-like"/>
</dbReference>
<dbReference type="NCBIfam" id="NF002049">
    <property type="entry name" value="PRK00881.1"/>
    <property type="match status" value="1"/>
</dbReference>
<dbReference type="NCBIfam" id="TIGR00355">
    <property type="entry name" value="purH"/>
    <property type="match status" value="1"/>
</dbReference>
<dbReference type="PANTHER" id="PTHR11692:SF0">
    <property type="entry name" value="BIFUNCTIONAL PURINE BIOSYNTHESIS PROTEIN ATIC"/>
    <property type="match status" value="1"/>
</dbReference>
<dbReference type="PANTHER" id="PTHR11692">
    <property type="entry name" value="BIFUNCTIONAL PURINE BIOSYNTHESIS PROTEIN PURH"/>
    <property type="match status" value="1"/>
</dbReference>
<dbReference type="Pfam" id="PF01808">
    <property type="entry name" value="AICARFT_IMPCHas"/>
    <property type="match status" value="1"/>
</dbReference>
<dbReference type="Pfam" id="PF02142">
    <property type="entry name" value="MGS"/>
    <property type="match status" value="1"/>
</dbReference>
<dbReference type="PIRSF" id="PIRSF000414">
    <property type="entry name" value="AICARFT_IMPCHas"/>
    <property type="match status" value="1"/>
</dbReference>
<dbReference type="SMART" id="SM00798">
    <property type="entry name" value="AICARFT_IMPCHas"/>
    <property type="match status" value="1"/>
</dbReference>
<dbReference type="SMART" id="SM00851">
    <property type="entry name" value="MGS"/>
    <property type="match status" value="1"/>
</dbReference>
<dbReference type="SUPFAM" id="SSF53927">
    <property type="entry name" value="Cytidine deaminase-like"/>
    <property type="match status" value="1"/>
</dbReference>
<dbReference type="SUPFAM" id="SSF52335">
    <property type="entry name" value="Methylglyoxal synthase-like"/>
    <property type="match status" value="1"/>
</dbReference>
<dbReference type="PROSITE" id="PS51855">
    <property type="entry name" value="MGS"/>
    <property type="match status" value="1"/>
</dbReference>
<organism>
    <name type="scientific">Chromobacterium violaceum (strain ATCC 12472 / DSM 30191 / JCM 1249 / CCUG 213 / NBRC 12614 / NCIMB 9131 / NCTC 9757 / MK)</name>
    <dbReference type="NCBI Taxonomy" id="243365"/>
    <lineage>
        <taxon>Bacteria</taxon>
        <taxon>Pseudomonadati</taxon>
        <taxon>Pseudomonadota</taxon>
        <taxon>Betaproteobacteria</taxon>
        <taxon>Neisseriales</taxon>
        <taxon>Chromobacteriaceae</taxon>
        <taxon>Chromobacterium</taxon>
    </lineage>
</organism>
<gene>
    <name evidence="1" type="primary">purH</name>
    <name type="ordered locus">CV_0546</name>
</gene>
<feature type="chain" id="PRO_1000018873" description="Bifunctional purine biosynthesis protein PurH">
    <location>
        <begin position="1"/>
        <end position="525"/>
    </location>
</feature>
<feature type="domain" description="MGS-like" evidence="2">
    <location>
        <begin position="1"/>
        <end position="147"/>
    </location>
</feature>
<name>PUR9_CHRVO</name>
<accession>Q7P0M1</accession>
<evidence type="ECO:0000255" key="1">
    <source>
        <dbReference type="HAMAP-Rule" id="MF_00139"/>
    </source>
</evidence>
<evidence type="ECO:0000255" key="2">
    <source>
        <dbReference type="PROSITE-ProRule" id="PRU01202"/>
    </source>
</evidence>
<protein>
    <recommendedName>
        <fullName evidence="1">Bifunctional purine biosynthesis protein PurH</fullName>
    </recommendedName>
    <domain>
        <recommendedName>
            <fullName evidence="1">Phosphoribosylaminoimidazolecarboxamide formyltransferase</fullName>
            <ecNumber evidence="1">2.1.2.3</ecNumber>
        </recommendedName>
        <alternativeName>
            <fullName evidence="1">AICAR transformylase</fullName>
        </alternativeName>
    </domain>
    <domain>
        <recommendedName>
            <fullName evidence="1">IMP cyclohydrolase</fullName>
            <ecNumber evidence="1">3.5.4.10</ecNumber>
        </recommendedName>
        <alternativeName>
            <fullName evidence="1">ATIC</fullName>
        </alternativeName>
        <alternativeName>
            <fullName evidence="1">IMP synthase</fullName>
        </alternativeName>
        <alternativeName>
            <fullName evidence="1">Inosinicase</fullName>
        </alternativeName>
    </domain>
</protein>
<reference key="1">
    <citation type="journal article" date="2003" name="Proc. Natl. Acad. Sci. U.S.A.">
        <title>The complete genome sequence of Chromobacterium violaceum reveals remarkable and exploitable bacterial adaptability.</title>
        <authorList>
            <person name="Vasconcelos A.T.R."/>
            <person name="de Almeida D.F."/>
            <person name="Hungria M."/>
            <person name="Guimaraes C.T."/>
            <person name="Antonio R.V."/>
            <person name="Almeida F.C."/>
            <person name="de Almeida L.G.P."/>
            <person name="de Almeida R."/>
            <person name="Alves-Gomes J.A."/>
            <person name="Andrade E.M."/>
            <person name="Araripe J."/>
            <person name="de Araujo M.F.F."/>
            <person name="Astolfi-Filho S."/>
            <person name="Azevedo V."/>
            <person name="Baptista A.J."/>
            <person name="Bataus L.A.M."/>
            <person name="Batista J.S."/>
            <person name="Belo A."/>
            <person name="van den Berg C."/>
            <person name="Bogo M."/>
            <person name="Bonatto S."/>
            <person name="Bordignon J."/>
            <person name="Brigido M.M."/>
            <person name="Brito C.A."/>
            <person name="Brocchi M."/>
            <person name="Burity H.A."/>
            <person name="Camargo A.A."/>
            <person name="Cardoso D.D.P."/>
            <person name="Carneiro N.P."/>
            <person name="Carraro D.M."/>
            <person name="Carvalho C.M.B."/>
            <person name="Cascardo J.C.M."/>
            <person name="Cavada B.S."/>
            <person name="Chueire L.M.O."/>
            <person name="Creczynski-Pasa T.B."/>
            <person name="Cunha-Junior N.C."/>
            <person name="Fagundes N."/>
            <person name="Falcao C.L."/>
            <person name="Fantinatti F."/>
            <person name="Farias I.P."/>
            <person name="Felipe M.S.S."/>
            <person name="Ferrari L.P."/>
            <person name="Ferro J.A."/>
            <person name="Ferro M.I.T."/>
            <person name="Franco G.R."/>
            <person name="Freitas N.S.A."/>
            <person name="Furlan L.R."/>
            <person name="Gazzinelli R.T."/>
            <person name="Gomes E.A."/>
            <person name="Goncalves P.R."/>
            <person name="Grangeiro T.B."/>
            <person name="Grattapaglia D."/>
            <person name="Grisard E.C."/>
            <person name="Hanna E.S."/>
            <person name="Jardim S.N."/>
            <person name="Laurino J."/>
            <person name="Leoi L.C.T."/>
            <person name="Lima L.F.A."/>
            <person name="Loureiro M.F."/>
            <person name="Lyra M.C.C.P."/>
            <person name="Madeira H.M.F."/>
            <person name="Manfio G.P."/>
            <person name="Maranhao A.Q."/>
            <person name="Martins W.S."/>
            <person name="di Mauro S.M.Z."/>
            <person name="de Medeiros S.R.B."/>
            <person name="Meissner R.V."/>
            <person name="Moreira M.A.M."/>
            <person name="Nascimento F.F."/>
            <person name="Nicolas M.F."/>
            <person name="Oliveira J.G."/>
            <person name="Oliveira S.C."/>
            <person name="Paixao R.F.C."/>
            <person name="Parente J.A."/>
            <person name="Pedrosa F.O."/>
            <person name="Pena S.D.J."/>
            <person name="Pereira J.O."/>
            <person name="Pereira M."/>
            <person name="Pinto L.S.R.C."/>
            <person name="Pinto L.S."/>
            <person name="Porto J.I.R."/>
            <person name="Potrich D.P."/>
            <person name="Ramalho-Neto C.E."/>
            <person name="Reis A.M.M."/>
            <person name="Rigo L.U."/>
            <person name="Rondinelli E."/>
            <person name="Santos E.B.P."/>
            <person name="Santos F.R."/>
            <person name="Schneider M.P.C."/>
            <person name="Seuanez H.N."/>
            <person name="Silva A.M.R."/>
            <person name="da Silva A.L.C."/>
            <person name="Silva D.W."/>
            <person name="Silva R."/>
            <person name="Simoes I.C."/>
            <person name="Simon D."/>
            <person name="Soares C.M.A."/>
            <person name="Soares R.B.A."/>
            <person name="Souza E.M."/>
            <person name="Souza K.R.L."/>
            <person name="Souza R.C."/>
            <person name="Steffens M.B.R."/>
            <person name="Steindel M."/>
            <person name="Teixeira S.R."/>
            <person name="Urmenyi T."/>
            <person name="Vettore A."/>
            <person name="Wassem R."/>
            <person name="Zaha A."/>
            <person name="Simpson A.J.G."/>
        </authorList>
    </citation>
    <scope>NUCLEOTIDE SEQUENCE [LARGE SCALE GENOMIC DNA]</scope>
    <source>
        <strain>ATCC 12472 / DSM 30191 / JCM 1249 / CCUG 213 / NBRC 12614 / NCIMB 9131 / NCTC 9757 / MK</strain>
    </source>
</reference>
<comment type="catalytic activity">
    <reaction evidence="1">
        <text>(6R)-10-formyltetrahydrofolate + 5-amino-1-(5-phospho-beta-D-ribosyl)imidazole-4-carboxamide = 5-formamido-1-(5-phospho-D-ribosyl)imidazole-4-carboxamide + (6S)-5,6,7,8-tetrahydrofolate</text>
        <dbReference type="Rhea" id="RHEA:22192"/>
        <dbReference type="ChEBI" id="CHEBI:57453"/>
        <dbReference type="ChEBI" id="CHEBI:58467"/>
        <dbReference type="ChEBI" id="CHEBI:58475"/>
        <dbReference type="ChEBI" id="CHEBI:195366"/>
        <dbReference type="EC" id="2.1.2.3"/>
    </reaction>
</comment>
<comment type="catalytic activity">
    <reaction evidence="1">
        <text>IMP + H2O = 5-formamido-1-(5-phospho-D-ribosyl)imidazole-4-carboxamide</text>
        <dbReference type="Rhea" id="RHEA:18445"/>
        <dbReference type="ChEBI" id="CHEBI:15377"/>
        <dbReference type="ChEBI" id="CHEBI:58053"/>
        <dbReference type="ChEBI" id="CHEBI:58467"/>
        <dbReference type="EC" id="3.5.4.10"/>
    </reaction>
</comment>
<comment type="pathway">
    <text evidence="1">Purine metabolism; IMP biosynthesis via de novo pathway; 5-formamido-1-(5-phospho-D-ribosyl)imidazole-4-carboxamide from 5-amino-1-(5-phospho-D-ribosyl)imidazole-4-carboxamide (10-formyl THF route): step 1/1.</text>
</comment>
<comment type="pathway">
    <text evidence="1">Purine metabolism; IMP biosynthesis via de novo pathway; IMP from 5-formamido-1-(5-phospho-D-ribosyl)imidazole-4-carboxamide: step 1/1.</text>
</comment>
<comment type="domain">
    <text evidence="1">The IMP cyclohydrolase activity resides in the N-terminal region.</text>
</comment>
<comment type="similarity">
    <text evidence="1">Belongs to the PurH family.</text>
</comment>
<proteinExistence type="inferred from homology"/>
<keyword id="KW-0378">Hydrolase</keyword>
<keyword id="KW-0511">Multifunctional enzyme</keyword>
<keyword id="KW-0658">Purine biosynthesis</keyword>
<keyword id="KW-1185">Reference proteome</keyword>
<keyword id="KW-0808">Transferase</keyword>